<reference key="1">
    <citation type="journal article" date="2004" name="PLoS Biol.">
        <title>Genomic insights into methanotrophy: the complete genome sequence of Methylococcus capsulatus (Bath).</title>
        <authorList>
            <person name="Ward N.L."/>
            <person name="Larsen O."/>
            <person name="Sakwa J."/>
            <person name="Bruseth L."/>
            <person name="Khouri H.M."/>
            <person name="Durkin A.S."/>
            <person name="Dimitrov G."/>
            <person name="Jiang L."/>
            <person name="Scanlan D."/>
            <person name="Kang K.H."/>
            <person name="Lewis M.R."/>
            <person name="Nelson K.E."/>
            <person name="Methe B.A."/>
            <person name="Wu M."/>
            <person name="Heidelberg J.F."/>
            <person name="Paulsen I.T."/>
            <person name="Fouts D.E."/>
            <person name="Ravel J."/>
            <person name="Tettelin H."/>
            <person name="Ren Q."/>
            <person name="Read T.D."/>
            <person name="DeBoy R.T."/>
            <person name="Seshadri R."/>
            <person name="Salzberg S.L."/>
            <person name="Jensen H.B."/>
            <person name="Birkeland N.K."/>
            <person name="Nelson W.C."/>
            <person name="Dodson R.J."/>
            <person name="Grindhaug S.H."/>
            <person name="Holt I.E."/>
            <person name="Eidhammer I."/>
            <person name="Jonasen I."/>
            <person name="Vanaken S."/>
            <person name="Utterback T.R."/>
            <person name="Feldblyum T.V."/>
            <person name="Fraser C.M."/>
            <person name="Lillehaug J.R."/>
            <person name="Eisen J.A."/>
        </authorList>
    </citation>
    <scope>NUCLEOTIDE SEQUENCE [LARGE SCALE GENOMIC DNA]</scope>
    <source>
        <strain>ATCC 33009 / NCIMB 11132 / Bath</strain>
    </source>
</reference>
<proteinExistence type="inferred from homology"/>
<organism>
    <name type="scientific">Methylococcus capsulatus (strain ATCC 33009 / NCIMB 11132 / Bath)</name>
    <dbReference type="NCBI Taxonomy" id="243233"/>
    <lineage>
        <taxon>Bacteria</taxon>
        <taxon>Pseudomonadati</taxon>
        <taxon>Pseudomonadota</taxon>
        <taxon>Gammaproteobacteria</taxon>
        <taxon>Methylococcales</taxon>
        <taxon>Methylococcaceae</taxon>
        <taxon>Methylococcus</taxon>
    </lineage>
</organism>
<protein>
    <recommendedName>
        <fullName evidence="1">Small ribosomal subunit protein uS13</fullName>
    </recommendedName>
    <alternativeName>
        <fullName evidence="3">30S ribosomal protein S13</fullName>
    </alternativeName>
</protein>
<comment type="function">
    <text evidence="1">Located at the top of the head of the 30S subunit, it contacts several helices of the 16S rRNA. In the 70S ribosome it contacts the 23S rRNA (bridge B1a) and protein L5 of the 50S subunit (bridge B1b), connecting the 2 subunits; these bridges are implicated in subunit movement. Contacts the tRNAs in the A and P-sites.</text>
</comment>
<comment type="subunit">
    <text evidence="1">Part of the 30S ribosomal subunit. Forms a loose heterodimer with protein S19. Forms two bridges to the 50S subunit in the 70S ribosome.</text>
</comment>
<comment type="similarity">
    <text evidence="1">Belongs to the universal ribosomal protein uS13 family.</text>
</comment>
<feature type="chain" id="PRO_0000230525" description="Small ribosomal subunit protein uS13">
    <location>
        <begin position="1"/>
        <end position="118"/>
    </location>
</feature>
<feature type="region of interest" description="Disordered" evidence="2">
    <location>
        <begin position="91"/>
        <end position="118"/>
    </location>
</feature>
<gene>
    <name evidence="1" type="primary">rpsM</name>
    <name type="ordered locus">MCA2350</name>
</gene>
<name>RS13_METCA</name>
<evidence type="ECO:0000255" key="1">
    <source>
        <dbReference type="HAMAP-Rule" id="MF_01315"/>
    </source>
</evidence>
<evidence type="ECO:0000256" key="2">
    <source>
        <dbReference type="SAM" id="MobiDB-lite"/>
    </source>
</evidence>
<evidence type="ECO:0000305" key="3"/>
<dbReference type="EMBL" id="AE017282">
    <property type="protein sequence ID" value="AAU91490.1"/>
    <property type="molecule type" value="Genomic_DNA"/>
</dbReference>
<dbReference type="RefSeq" id="WP_010961578.1">
    <property type="nucleotide sequence ID" value="NC_002977.6"/>
</dbReference>
<dbReference type="SMR" id="Q605D4"/>
<dbReference type="STRING" id="243233.MCA2350"/>
<dbReference type="GeneID" id="88224554"/>
<dbReference type="KEGG" id="mca:MCA2350"/>
<dbReference type="eggNOG" id="COG0099">
    <property type="taxonomic scope" value="Bacteria"/>
</dbReference>
<dbReference type="HOGENOM" id="CLU_103849_1_2_6"/>
<dbReference type="Proteomes" id="UP000006821">
    <property type="component" value="Chromosome"/>
</dbReference>
<dbReference type="GO" id="GO:0005829">
    <property type="term" value="C:cytosol"/>
    <property type="evidence" value="ECO:0007669"/>
    <property type="project" value="TreeGrafter"/>
</dbReference>
<dbReference type="GO" id="GO:0015935">
    <property type="term" value="C:small ribosomal subunit"/>
    <property type="evidence" value="ECO:0007669"/>
    <property type="project" value="TreeGrafter"/>
</dbReference>
<dbReference type="GO" id="GO:0019843">
    <property type="term" value="F:rRNA binding"/>
    <property type="evidence" value="ECO:0007669"/>
    <property type="project" value="UniProtKB-UniRule"/>
</dbReference>
<dbReference type="GO" id="GO:0003735">
    <property type="term" value="F:structural constituent of ribosome"/>
    <property type="evidence" value="ECO:0007669"/>
    <property type="project" value="InterPro"/>
</dbReference>
<dbReference type="GO" id="GO:0000049">
    <property type="term" value="F:tRNA binding"/>
    <property type="evidence" value="ECO:0007669"/>
    <property type="project" value="UniProtKB-UniRule"/>
</dbReference>
<dbReference type="GO" id="GO:0006412">
    <property type="term" value="P:translation"/>
    <property type="evidence" value="ECO:0007669"/>
    <property type="project" value="UniProtKB-UniRule"/>
</dbReference>
<dbReference type="FunFam" id="1.10.8.50:FF:000001">
    <property type="entry name" value="30S ribosomal protein S13"/>
    <property type="match status" value="1"/>
</dbReference>
<dbReference type="FunFam" id="4.10.910.10:FF:000001">
    <property type="entry name" value="30S ribosomal protein S13"/>
    <property type="match status" value="1"/>
</dbReference>
<dbReference type="Gene3D" id="1.10.8.50">
    <property type="match status" value="1"/>
</dbReference>
<dbReference type="Gene3D" id="4.10.910.10">
    <property type="entry name" value="30s ribosomal protein s13, domain 2"/>
    <property type="match status" value="1"/>
</dbReference>
<dbReference type="HAMAP" id="MF_01315">
    <property type="entry name" value="Ribosomal_uS13"/>
    <property type="match status" value="1"/>
</dbReference>
<dbReference type="InterPro" id="IPR027437">
    <property type="entry name" value="Rbsml_uS13_C"/>
</dbReference>
<dbReference type="InterPro" id="IPR001892">
    <property type="entry name" value="Ribosomal_uS13"/>
</dbReference>
<dbReference type="InterPro" id="IPR010979">
    <property type="entry name" value="Ribosomal_uS13-like_H2TH"/>
</dbReference>
<dbReference type="InterPro" id="IPR019980">
    <property type="entry name" value="Ribosomal_uS13_bac-type"/>
</dbReference>
<dbReference type="InterPro" id="IPR018269">
    <property type="entry name" value="Ribosomal_uS13_CS"/>
</dbReference>
<dbReference type="NCBIfam" id="TIGR03631">
    <property type="entry name" value="uS13_bact"/>
    <property type="match status" value="1"/>
</dbReference>
<dbReference type="PANTHER" id="PTHR10871">
    <property type="entry name" value="30S RIBOSOMAL PROTEIN S13/40S RIBOSOMAL PROTEIN S18"/>
    <property type="match status" value="1"/>
</dbReference>
<dbReference type="PANTHER" id="PTHR10871:SF1">
    <property type="entry name" value="SMALL RIBOSOMAL SUBUNIT PROTEIN US13M"/>
    <property type="match status" value="1"/>
</dbReference>
<dbReference type="Pfam" id="PF00416">
    <property type="entry name" value="Ribosomal_S13"/>
    <property type="match status" value="1"/>
</dbReference>
<dbReference type="PIRSF" id="PIRSF002134">
    <property type="entry name" value="Ribosomal_S13"/>
    <property type="match status" value="1"/>
</dbReference>
<dbReference type="SUPFAM" id="SSF46946">
    <property type="entry name" value="S13-like H2TH domain"/>
    <property type="match status" value="1"/>
</dbReference>
<dbReference type="PROSITE" id="PS00646">
    <property type="entry name" value="RIBOSOMAL_S13_1"/>
    <property type="match status" value="1"/>
</dbReference>
<dbReference type="PROSITE" id="PS50159">
    <property type="entry name" value="RIBOSOMAL_S13_2"/>
    <property type="match status" value="1"/>
</dbReference>
<sequence length="118" mass="13439">MARIAGVNIPDHKHVLISLTAIYGIGRTRAGLICKNAGIETDKKVRELSDEQVERLRGEVAKFVVEGDLRREVAMNIKRLMDLGSYRGMRHRRGLPVRGQRTRTNARTRKGPRRPIKK</sequence>
<accession>Q605D4</accession>
<keyword id="KW-1185">Reference proteome</keyword>
<keyword id="KW-0687">Ribonucleoprotein</keyword>
<keyword id="KW-0689">Ribosomal protein</keyword>
<keyword id="KW-0694">RNA-binding</keyword>
<keyword id="KW-0699">rRNA-binding</keyword>
<keyword id="KW-0820">tRNA-binding</keyword>